<accession>C1CRA4</accession>
<proteinExistence type="inferred from homology"/>
<gene>
    <name evidence="1" type="primary">lacA</name>
    <name type="ordered locus">SPT_1033</name>
</gene>
<comment type="catalytic activity">
    <reaction evidence="1">
        <text>aldehydo-D-galactose 6-phosphate = keto-D-tagatose 6-phosphate</text>
        <dbReference type="Rhea" id="RHEA:13033"/>
        <dbReference type="ChEBI" id="CHEBI:58255"/>
        <dbReference type="ChEBI" id="CHEBI:134283"/>
        <dbReference type="EC" id="5.3.1.26"/>
    </reaction>
</comment>
<comment type="pathway">
    <text evidence="1">Carbohydrate metabolism; D-galactose 6-phosphate degradation; D-tagatose 6-phosphate from D-galactose 6-phosphate: step 1/1.</text>
</comment>
<comment type="subunit">
    <text evidence="1">Heteromultimeric protein consisting of LacA and LacB.</text>
</comment>
<comment type="similarity">
    <text evidence="1">Belongs to the LacAB/RpiB family.</text>
</comment>
<keyword id="KW-0413">Isomerase</keyword>
<keyword id="KW-0423">Lactose metabolism</keyword>
<reference key="1">
    <citation type="journal article" date="2010" name="Genome Biol.">
        <title>Structure and dynamics of the pan-genome of Streptococcus pneumoniae and closely related species.</title>
        <authorList>
            <person name="Donati C."/>
            <person name="Hiller N.L."/>
            <person name="Tettelin H."/>
            <person name="Muzzi A."/>
            <person name="Croucher N.J."/>
            <person name="Angiuoli S.V."/>
            <person name="Oggioni M."/>
            <person name="Dunning Hotopp J.C."/>
            <person name="Hu F.Z."/>
            <person name="Riley D.R."/>
            <person name="Covacci A."/>
            <person name="Mitchell T.J."/>
            <person name="Bentley S.D."/>
            <person name="Kilian M."/>
            <person name="Ehrlich G.D."/>
            <person name="Rappuoli R."/>
            <person name="Moxon E.R."/>
            <person name="Masignani V."/>
        </authorList>
    </citation>
    <scope>NUCLEOTIDE SEQUENCE [LARGE SCALE GENOMIC DNA]</scope>
    <source>
        <strain>Taiwan19F-14</strain>
    </source>
</reference>
<sequence>MSIVIGADAAGLRLKEVVKDFLEKENFHLVDVTAEGQDFVDVTLAVAAEVNKEEQNLGIVIDAYGAGPFIVATKIKGMVAAEVSDERSAYMTRSHNNSRMITMGAQLVGDELAKNIAKGFVNGKYDGGRHQIRVDMLNKMG</sequence>
<organism>
    <name type="scientific">Streptococcus pneumoniae (strain Taiwan19F-14)</name>
    <dbReference type="NCBI Taxonomy" id="487213"/>
    <lineage>
        <taxon>Bacteria</taxon>
        <taxon>Bacillati</taxon>
        <taxon>Bacillota</taxon>
        <taxon>Bacilli</taxon>
        <taxon>Lactobacillales</taxon>
        <taxon>Streptococcaceae</taxon>
        <taxon>Streptococcus</taxon>
    </lineage>
</organism>
<protein>
    <recommendedName>
        <fullName evidence="1">Galactose-6-phosphate isomerase subunit LacA</fullName>
        <ecNumber evidence="1">5.3.1.26</ecNumber>
    </recommendedName>
</protein>
<evidence type="ECO:0000255" key="1">
    <source>
        <dbReference type="HAMAP-Rule" id="MF_01555"/>
    </source>
</evidence>
<dbReference type="EC" id="5.3.1.26" evidence="1"/>
<dbReference type="EMBL" id="CP000921">
    <property type="protein sequence ID" value="ACO23234.1"/>
    <property type="molecule type" value="Genomic_DNA"/>
</dbReference>
<dbReference type="RefSeq" id="WP_000029270.1">
    <property type="nucleotide sequence ID" value="NC_012469.1"/>
</dbReference>
<dbReference type="SMR" id="C1CRA4"/>
<dbReference type="KEGG" id="snt:SPT_1033"/>
<dbReference type="HOGENOM" id="CLU_091396_4_2_9"/>
<dbReference type="UniPathway" id="UPA00702">
    <property type="reaction ID" value="UER00714"/>
</dbReference>
<dbReference type="GO" id="GO:0050044">
    <property type="term" value="F:galactose-6-phosphate isomerase activity"/>
    <property type="evidence" value="ECO:0007669"/>
    <property type="project" value="UniProtKB-UniRule"/>
</dbReference>
<dbReference type="GO" id="GO:0004751">
    <property type="term" value="F:ribose-5-phosphate isomerase activity"/>
    <property type="evidence" value="ECO:0007669"/>
    <property type="project" value="TreeGrafter"/>
</dbReference>
<dbReference type="GO" id="GO:0019316">
    <property type="term" value="P:D-allose catabolic process"/>
    <property type="evidence" value="ECO:0007669"/>
    <property type="project" value="TreeGrafter"/>
</dbReference>
<dbReference type="GO" id="GO:0019388">
    <property type="term" value="P:galactose catabolic process"/>
    <property type="evidence" value="ECO:0007669"/>
    <property type="project" value="UniProtKB-UniPathway"/>
</dbReference>
<dbReference type="GO" id="GO:0019512">
    <property type="term" value="P:lactose catabolic process via tagatose-6-phosphate"/>
    <property type="evidence" value="ECO:0007669"/>
    <property type="project" value="UniProtKB-UniRule"/>
</dbReference>
<dbReference type="GO" id="GO:0009052">
    <property type="term" value="P:pentose-phosphate shunt, non-oxidative branch"/>
    <property type="evidence" value="ECO:0007669"/>
    <property type="project" value="TreeGrafter"/>
</dbReference>
<dbReference type="Gene3D" id="3.40.1400.10">
    <property type="entry name" value="Sugar-phosphate isomerase, RpiB/LacA/LacB"/>
    <property type="match status" value="1"/>
</dbReference>
<dbReference type="HAMAP" id="MF_01555">
    <property type="entry name" value="LacA"/>
    <property type="match status" value="1"/>
</dbReference>
<dbReference type="InterPro" id="IPR004783">
    <property type="entry name" value="LacA"/>
</dbReference>
<dbReference type="InterPro" id="IPR003500">
    <property type="entry name" value="RpiB_LacA_LacB"/>
</dbReference>
<dbReference type="InterPro" id="IPR036569">
    <property type="entry name" value="RpiB_LacA_LacB_sf"/>
</dbReference>
<dbReference type="NCBIfam" id="TIGR01118">
    <property type="entry name" value="lacA"/>
    <property type="match status" value="1"/>
</dbReference>
<dbReference type="NCBIfam" id="NF006380">
    <property type="entry name" value="PRK08621.1"/>
    <property type="match status" value="1"/>
</dbReference>
<dbReference type="NCBIfam" id="NF009257">
    <property type="entry name" value="PRK12613.1"/>
    <property type="match status" value="1"/>
</dbReference>
<dbReference type="NCBIfam" id="TIGR00689">
    <property type="entry name" value="rpiB_lacA_lacB"/>
    <property type="match status" value="1"/>
</dbReference>
<dbReference type="PANTHER" id="PTHR30345:SF5">
    <property type="entry name" value="GALACTOSE-6-PHOSPHATE ISOMERASE SUBUNIT LACA"/>
    <property type="match status" value="1"/>
</dbReference>
<dbReference type="PANTHER" id="PTHR30345">
    <property type="entry name" value="RIBOSE-5-PHOSPHATE ISOMERASE B"/>
    <property type="match status" value="1"/>
</dbReference>
<dbReference type="Pfam" id="PF02502">
    <property type="entry name" value="LacAB_rpiB"/>
    <property type="match status" value="1"/>
</dbReference>
<dbReference type="PIRSF" id="PIRSF005384">
    <property type="entry name" value="RpiB_LacA_B"/>
    <property type="match status" value="1"/>
</dbReference>
<dbReference type="SUPFAM" id="SSF89623">
    <property type="entry name" value="Ribose/Galactose isomerase RpiB/AlsB"/>
    <property type="match status" value="1"/>
</dbReference>
<feature type="chain" id="PRO_1000185401" description="Galactose-6-phosphate isomerase subunit LacA">
    <location>
        <begin position="1"/>
        <end position="141"/>
    </location>
</feature>
<name>LACA_STRZT</name>